<comment type="function">
    <text evidence="1">Bifunctional enzyme with both catalase and broad-spectrum peroxidase activity.</text>
</comment>
<comment type="catalytic activity">
    <reaction evidence="1">
        <text>H2O2 + AH2 = A + 2 H2O</text>
        <dbReference type="Rhea" id="RHEA:30275"/>
        <dbReference type="ChEBI" id="CHEBI:13193"/>
        <dbReference type="ChEBI" id="CHEBI:15377"/>
        <dbReference type="ChEBI" id="CHEBI:16240"/>
        <dbReference type="ChEBI" id="CHEBI:17499"/>
        <dbReference type="EC" id="1.11.1.21"/>
    </reaction>
</comment>
<comment type="catalytic activity">
    <reaction evidence="1">
        <text>2 H2O2 = O2 + 2 H2O</text>
        <dbReference type="Rhea" id="RHEA:20309"/>
        <dbReference type="ChEBI" id="CHEBI:15377"/>
        <dbReference type="ChEBI" id="CHEBI:15379"/>
        <dbReference type="ChEBI" id="CHEBI:16240"/>
        <dbReference type="EC" id="1.11.1.21"/>
    </reaction>
</comment>
<comment type="cofactor">
    <cofactor evidence="1">
        <name>heme b</name>
        <dbReference type="ChEBI" id="CHEBI:60344"/>
    </cofactor>
    <text evidence="1">Binds 1 heme b (iron(II)-protoporphyrin IX) group per dimer.</text>
</comment>
<comment type="subunit">
    <text evidence="1">Homodimer or homotetramer.</text>
</comment>
<comment type="PTM">
    <text evidence="1">Formation of the three residue Trp-Tyr-Met cross-link is important for the catalase, but not the peroxidase activity of the enzyme.</text>
</comment>
<comment type="similarity">
    <text evidence="1">Belongs to the peroxidase family. Peroxidase/catalase subfamily.</text>
</comment>
<name>KATG_ACAM1</name>
<evidence type="ECO:0000255" key="1">
    <source>
        <dbReference type="HAMAP-Rule" id="MF_01961"/>
    </source>
</evidence>
<feature type="chain" id="PRO_0000354707" description="Catalase-peroxidase">
    <location>
        <begin position="1"/>
        <end position="732"/>
    </location>
</feature>
<feature type="active site" description="Proton acceptor" evidence="1">
    <location>
        <position position="97"/>
    </location>
</feature>
<feature type="binding site" description="axial binding residue" evidence="1">
    <location>
        <position position="260"/>
    </location>
    <ligand>
        <name>heme b</name>
        <dbReference type="ChEBI" id="CHEBI:60344"/>
    </ligand>
    <ligandPart>
        <name>Fe</name>
        <dbReference type="ChEBI" id="CHEBI:18248"/>
    </ligandPart>
</feature>
<feature type="site" description="Transition state stabilizer" evidence="1">
    <location>
        <position position="93"/>
    </location>
</feature>
<feature type="cross-link" description="Tryptophyl-tyrosyl-methioninium (Trp-Tyr) (with M-245)" evidence="1">
    <location>
        <begin position="96"/>
        <end position="219"/>
    </location>
</feature>
<feature type="cross-link" description="Tryptophyl-tyrosyl-methioninium (Tyr-Met) (with W-96)" evidence="1">
    <location>
        <begin position="219"/>
        <end position="245"/>
    </location>
</feature>
<gene>
    <name evidence="1" type="primary">katG</name>
    <name type="ordered locus">AM1_3715</name>
</gene>
<sequence length="732" mass="80691">MSSASKCPFSGGALKFTAGSGTANRDWWPNQLNLQILRQHSPKSNPMDKAFNYAEAFKSLDLADVKQDIFDLMKSSQDWWPADYGHYGPLFIRMAWHSAGTYRIGDGRGGAGTGNQRFAPINSWPDNANLDKARMLLWPIKQKYGAKISWADLMILAGNCALESMGFKTFGFAGGREDIWEPEEDIYWGAETEWLGDQRYTGDRDLEATLGAVQMGLIYVNPEGPNGHPDPVASGRDIRETFGRMAMNDEETVALTAGGHTFGKCHGAGDDAHVGPEPEGARIEDQCLGWKSSFGTGKGVHAITSGIEGAWTTNPTQWDNNYFENLFGYEWELTKSPAGANQWVPQGGAGANTVPDAHDPSRRHAPIMTTADMAMRMDPIYSPISRRFLDNPDQFADAFARAWFKLTHRDMGPRSRYLGPEVPEEELIWQDPVPAVNHELINEQDIATLKSQILATNLTVSQLVSTAWASAVTYRNSDKRGGANGARIRLAPQRDWEVNQPAQLATVLQTLEAVQTTFNHSQIGGKRVSLADLIVLGGCAGVEQAAKNAGWYDVKVPFKPGRTDATQAQTDVTSFAVLEPRADGFRNYLKGHYPVSAEELLVDKAQLLTLTAPEMTVLVGGLRVLNANVGQAQHGVFTHRPESLTNDFFLNLLDMSVTWAATSEAEEVFEGRDRKTGALKWTGTRVDLIFGSNSQLRALAEVYGCEDSQQRFVQDFVAAWDKVMNLDRFDLA</sequence>
<reference key="1">
    <citation type="journal article" date="2008" name="Proc. Natl. Acad. Sci. U.S.A.">
        <title>Niche adaptation and genome expansion in the chlorophyll d-producing cyanobacterium Acaryochloris marina.</title>
        <authorList>
            <person name="Swingley W.D."/>
            <person name="Chen M."/>
            <person name="Cheung P.C."/>
            <person name="Conrad A.L."/>
            <person name="Dejesa L.C."/>
            <person name="Hao J."/>
            <person name="Honchak B.M."/>
            <person name="Karbach L.E."/>
            <person name="Kurdoglu A."/>
            <person name="Lahiri S."/>
            <person name="Mastrian S.D."/>
            <person name="Miyashita H."/>
            <person name="Page L."/>
            <person name="Ramakrishna P."/>
            <person name="Satoh S."/>
            <person name="Sattley W.M."/>
            <person name="Shimada Y."/>
            <person name="Taylor H.L."/>
            <person name="Tomo T."/>
            <person name="Tsuchiya T."/>
            <person name="Wang Z.T."/>
            <person name="Raymond J."/>
            <person name="Mimuro M."/>
            <person name="Blankenship R.E."/>
            <person name="Touchman J.W."/>
        </authorList>
    </citation>
    <scope>NUCLEOTIDE SEQUENCE [LARGE SCALE GENOMIC DNA]</scope>
    <source>
        <strain>MBIC 11017</strain>
    </source>
</reference>
<accession>B0C4G1</accession>
<dbReference type="EC" id="1.11.1.21" evidence="1"/>
<dbReference type="EMBL" id="CP000828">
    <property type="protein sequence ID" value="ABW28705.1"/>
    <property type="molecule type" value="Genomic_DNA"/>
</dbReference>
<dbReference type="RefSeq" id="WP_012164084.1">
    <property type="nucleotide sequence ID" value="NC_009925.1"/>
</dbReference>
<dbReference type="SMR" id="B0C4G1"/>
<dbReference type="STRING" id="329726.AM1_3715"/>
<dbReference type="PeroxiBase" id="6248">
    <property type="entry name" value="ACmaCP01"/>
</dbReference>
<dbReference type="KEGG" id="amr:AM1_3715"/>
<dbReference type="eggNOG" id="COG0376">
    <property type="taxonomic scope" value="Bacteria"/>
</dbReference>
<dbReference type="HOGENOM" id="CLU_025424_2_0_3"/>
<dbReference type="OrthoDB" id="9759743at2"/>
<dbReference type="Proteomes" id="UP000000268">
    <property type="component" value="Chromosome"/>
</dbReference>
<dbReference type="GO" id="GO:0005829">
    <property type="term" value="C:cytosol"/>
    <property type="evidence" value="ECO:0007669"/>
    <property type="project" value="TreeGrafter"/>
</dbReference>
<dbReference type="GO" id="GO:0004096">
    <property type="term" value="F:catalase activity"/>
    <property type="evidence" value="ECO:0007669"/>
    <property type="project" value="UniProtKB-UniRule"/>
</dbReference>
<dbReference type="GO" id="GO:0020037">
    <property type="term" value="F:heme binding"/>
    <property type="evidence" value="ECO:0007669"/>
    <property type="project" value="InterPro"/>
</dbReference>
<dbReference type="GO" id="GO:0046872">
    <property type="term" value="F:metal ion binding"/>
    <property type="evidence" value="ECO:0007669"/>
    <property type="project" value="UniProtKB-KW"/>
</dbReference>
<dbReference type="GO" id="GO:0070301">
    <property type="term" value="P:cellular response to hydrogen peroxide"/>
    <property type="evidence" value="ECO:0007669"/>
    <property type="project" value="TreeGrafter"/>
</dbReference>
<dbReference type="GO" id="GO:0042744">
    <property type="term" value="P:hydrogen peroxide catabolic process"/>
    <property type="evidence" value="ECO:0007669"/>
    <property type="project" value="UniProtKB-KW"/>
</dbReference>
<dbReference type="CDD" id="cd00649">
    <property type="entry name" value="catalase_peroxidase_1"/>
    <property type="match status" value="1"/>
</dbReference>
<dbReference type="CDD" id="cd08200">
    <property type="entry name" value="catalase_peroxidase_2"/>
    <property type="match status" value="1"/>
</dbReference>
<dbReference type="FunFam" id="1.10.420.10:FF:000002">
    <property type="entry name" value="Catalase-peroxidase"/>
    <property type="match status" value="1"/>
</dbReference>
<dbReference type="FunFam" id="1.10.420.10:FF:000004">
    <property type="entry name" value="Catalase-peroxidase"/>
    <property type="match status" value="1"/>
</dbReference>
<dbReference type="FunFam" id="1.10.520.10:FF:000002">
    <property type="entry name" value="Catalase-peroxidase"/>
    <property type="match status" value="1"/>
</dbReference>
<dbReference type="Gene3D" id="1.10.520.10">
    <property type="match status" value="2"/>
</dbReference>
<dbReference type="Gene3D" id="1.10.420.10">
    <property type="entry name" value="Peroxidase, domain 2"/>
    <property type="match status" value="2"/>
</dbReference>
<dbReference type="HAMAP" id="MF_01961">
    <property type="entry name" value="Catal_peroxid"/>
    <property type="match status" value="1"/>
</dbReference>
<dbReference type="InterPro" id="IPR000763">
    <property type="entry name" value="Catalase_peroxidase"/>
</dbReference>
<dbReference type="InterPro" id="IPR002016">
    <property type="entry name" value="Haem_peroxidase"/>
</dbReference>
<dbReference type="InterPro" id="IPR010255">
    <property type="entry name" value="Haem_peroxidase_sf"/>
</dbReference>
<dbReference type="InterPro" id="IPR019794">
    <property type="entry name" value="Peroxidases_AS"/>
</dbReference>
<dbReference type="NCBIfam" id="TIGR00198">
    <property type="entry name" value="cat_per_HPI"/>
    <property type="match status" value="1"/>
</dbReference>
<dbReference type="NCBIfam" id="NF011635">
    <property type="entry name" value="PRK15061.1"/>
    <property type="match status" value="1"/>
</dbReference>
<dbReference type="PANTHER" id="PTHR30555:SF0">
    <property type="entry name" value="CATALASE-PEROXIDASE"/>
    <property type="match status" value="1"/>
</dbReference>
<dbReference type="PANTHER" id="PTHR30555">
    <property type="entry name" value="HYDROPEROXIDASE I, BIFUNCTIONAL CATALASE-PEROXIDASE"/>
    <property type="match status" value="1"/>
</dbReference>
<dbReference type="Pfam" id="PF00141">
    <property type="entry name" value="peroxidase"/>
    <property type="match status" value="2"/>
</dbReference>
<dbReference type="PRINTS" id="PR00460">
    <property type="entry name" value="BPEROXIDASE"/>
</dbReference>
<dbReference type="PRINTS" id="PR00458">
    <property type="entry name" value="PEROXIDASE"/>
</dbReference>
<dbReference type="SUPFAM" id="SSF48113">
    <property type="entry name" value="Heme-dependent peroxidases"/>
    <property type="match status" value="2"/>
</dbReference>
<dbReference type="PROSITE" id="PS00436">
    <property type="entry name" value="PEROXIDASE_2"/>
    <property type="match status" value="1"/>
</dbReference>
<dbReference type="PROSITE" id="PS50873">
    <property type="entry name" value="PEROXIDASE_4"/>
    <property type="match status" value="1"/>
</dbReference>
<protein>
    <recommendedName>
        <fullName evidence="1">Catalase-peroxidase</fullName>
        <shortName evidence="1">CP</shortName>
        <ecNumber evidence="1">1.11.1.21</ecNumber>
    </recommendedName>
    <alternativeName>
        <fullName evidence="1">Peroxidase/catalase</fullName>
    </alternativeName>
</protein>
<organism>
    <name type="scientific">Acaryochloris marina (strain MBIC 11017)</name>
    <dbReference type="NCBI Taxonomy" id="329726"/>
    <lineage>
        <taxon>Bacteria</taxon>
        <taxon>Bacillati</taxon>
        <taxon>Cyanobacteriota</taxon>
        <taxon>Cyanophyceae</taxon>
        <taxon>Acaryochloridales</taxon>
        <taxon>Acaryochloridaceae</taxon>
        <taxon>Acaryochloris</taxon>
    </lineage>
</organism>
<keyword id="KW-0349">Heme</keyword>
<keyword id="KW-0376">Hydrogen peroxide</keyword>
<keyword id="KW-0408">Iron</keyword>
<keyword id="KW-0479">Metal-binding</keyword>
<keyword id="KW-0560">Oxidoreductase</keyword>
<keyword id="KW-0575">Peroxidase</keyword>
<keyword id="KW-1185">Reference proteome</keyword>
<proteinExistence type="inferred from homology"/>